<dbReference type="EMBL" id="X13221">
    <property type="protein sequence ID" value="CAA31610.1"/>
    <property type="molecule type" value="mRNA"/>
</dbReference>
<dbReference type="EMBL" id="X14032">
    <property type="protein sequence ID" value="CAA32192.1"/>
    <property type="molecule type" value="mRNA"/>
</dbReference>
<dbReference type="EMBL" id="M35608">
    <property type="protein sequence ID" value="AAA30517.1"/>
    <property type="molecule type" value="mRNA"/>
</dbReference>
<dbReference type="EMBL" id="BC103225">
    <property type="protein sequence ID" value="AAI03226.1"/>
    <property type="molecule type" value="mRNA"/>
</dbReference>
<dbReference type="EMBL" id="M13439">
    <property type="protein sequence ID" value="AAA30516.1"/>
    <property type="molecule type" value="Genomic_DNA"/>
</dbReference>
<dbReference type="EMBL" id="X66446">
    <property type="protein sequence ID" value="CAA47063.1"/>
    <property type="molecule type" value="mRNA"/>
</dbReference>
<dbReference type="EMBL" id="M97660">
    <property type="protein sequence ID" value="AAA30563.1"/>
    <property type="molecule type" value="mRNA"/>
</dbReference>
<dbReference type="EMBL" id="M97661">
    <property type="protein sequence ID" value="AAA30564.1"/>
    <property type="molecule type" value="mRNA"/>
</dbReference>
<dbReference type="PIR" id="JH0613">
    <property type="entry name" value="GKBOA"/>
</dbReference>
<dbReference type="RefSeq" id="NP_001300935.1">
    <property type="nucleotide sequence ID" value="NM_001314006.1"/>
</dbReference>
<dbReference type="RefSeq" id="NP_776480.1">
    <property type="nucleotide sequence ID" value="NM_174055.3"/>
</dbReference>
<dbReference type="RefSeq" id="XP_015327761.1">
    <property type="nucleotide sequence ID" value="XM_015472275.3"/>
</dbReference>
<dbReference type="RefSeq" id="XP_015327762.1">
    <property type="nucleotide sequence ID" value="XM_015472276.3"/>
</dbReference>
<dbReference type="RefSeq" id="XP_015327763.1">
    <property type="nucleotide sequence ID" value="XM_015472277.3"/>
</dbReference>
<dbReference type="RefSeq" id="XP_024849601.1">
    <property type="nucleotide sequence ID" value="XM_024993833.2"/>
</dbReference>
<dbReference type="RefSeq" id="XP_024849602.1">
    <property type="nucleotide sequence ID" value="XM_024993834.2"/>
</dbReference>
<dbReference type="RefSeq" id="XP_059743907.1">
    <property type="nucleotide sequence ID" value="XM_059887924.1"/>
</dbReference>
<dbReference type="PDB" id="1AFC">
    <property type="method" value="X-ray"/>
    <property type="resolution" value="2.70 A"/>
    <property type="chains" value="A/B/C/D/E/F/G/H=16-155"/>
</dbReference>
<dbReference type="PDB" id="1BAR">
    <property type="method" value="X-ray"/>
    <property type="resolution" value="2.70 A"/>
    <property type="chains" value="A/B=16-155"/>
</dbReference>
<dbReference type="PDBsum" id="1AFC"/>
<dbReference type="PDBsum" id="1BAR"/>
<dbReference type="SMR" id="P03968"/>
<dbReference type="BioGRID" id="158520">
    <property type="interactions" value="1"/>
</dbReference>
<dbReference type="FunCoup" id="P03968">
    <property type="interactions" value="544"/>
</dbReference>
<dbReference type="IntAct" id="P03968">
    <property type="interactions" value="3"/>
</dbReference>
<dbReference type="STRING" id="9913.ENSBTAP00000058186"/>
<dbReference type="iPTMnet" id="P03968"/>
<dbReference type="PaxDb" id="9913-ENSBTAP00000040651"/>
<dbReference type="Ensembl" id="ENSBTAT00000072959.1">
    <property type="protein sequence ID" value="ENSBTAP00000058186.1"/>
    <property type="gene ID" value="ENSBTAG00000005198.7"/>
</dbReference>
<dbReference type="GeneID" id="281160"/>
<dbReference type="KEGG" id="bta:281160"/>
<dbReference type="CTD" id="2246"/>
<dbReference type="VEuPathDB" id="HostDB:ENSBTAG00000005198"/>
<dbReference type="VGNC" id="VGNC:28970">
    <property type="gene designation" value="FGF1"/>
</dbReference>
<dbReference type="eggNOG" id="KOG3885">
    <property type="taxonomic scope" value="Eukaryota"/>
</dbReference>
<dbReference type="GeneTree" id="ENSGT00940000160557"/>
<dbReference type="HOGENOM" id="CLU_081609_5_1_1"/>
<dbReference type="InParanoid" id="P03968"/>
<dbReference type="OMA" id="KSWFVGL"/>
<dbReference type="OrthoDB" id="5987799at2759"/>
<dbReference type="TreeFam" id="TF317805"/>
<dbReference type="Reactome" id="R-BTA-109704">
    <property type="pathway name" value="PI3K Cascade"/>
</dbReference>
<dbReference type="Reactome" id="R-BTA-1257604">
    <property type="pathway name" value="PIP3 activates AKT signaling"/>
</dbReference>
<dbReference type="Reactome" id="R-BTA-190322">
    <property type="pathway name" value="FGFR4 ligand binding and activation"/>
</dbReference>
<dbReference type="Reactome" id="R-BTA-190370">
    <property type="pathway name" value="FGFR1b ligand binding and activation"/>
</dbReference>
<dbReference type="Reactome" id="R-BTA-190371">
    <property type="pathway name" value="FGFR3b ligand binding and activation"/>
</dbReference>
<dbReference type="Reactome" id="R-BTA-190372">
    <property type="pathway name" value="FGFR3c ligand binding and activation"/>
</dbReference>
<dbReference type="Reactome" id="R-BTA-190373">
    <property type="pathway name" value="FGFR1c ligand binding and activation"/>
</dbReference>
<dbReference type="Reactome" id="R-BTA-190375">
    <property type="pathway name" value="FGFR2c ligand binding and activation"/>
</dbReference>
<dbReference type="Reactome" id="R-BTA-190377">
    <property type="pathway name" value="FGFR2b ligand binding and activation"/>
</dbReference>
<dbReference type="Reactome" id="R-BTA-5654219">
    <property type="pathway name" value="Phospholipase C-mediated cascade: FGFR1"/>
</dbReference>
<dbReference type="Reactome" id="R-BTA-5654221">
    <property type="pathway name" value="Phospholipase C-mediated cascade, FGFR2"/>
</dbReference>
<dbReference type="Reactome" id="R-BTA-5654227">
    <property type="pathway name" value="Phospholipase C-mediated cascade, FGFR3"/>
</dbReference>
<dbReference type="Reactome" id="R-BTA-5654228">
    <property type="pathway name" value="Phospholipase C-mediated cascade, FGFR4"/>
</dbReference>
<dbReference type="Reactome" id="R-BTA-5654687">
    <property type="pathway name" value="Downstream signaling of activated FGFR1"/>
</dbReference>
<dbReference type="Reactome" id="R-BTA-5654688">
    <property type="pathway name" value="SHC-mediated cascade:FGFR1"/>
</dbReference>
<dbReference type="Reactome" id="R-BTA-5654689">
    <property type="pathway name" value="PI-3K cascade:FGFR1"/>
</dbReference>
<dbReference type="Reactome" id="R-BTA-5654693">
    <property type="pathway name" value="FRS-mediated FGFR1 signaling"/>
</dbReference>
<dbReference type="Reactome" id="R-BTA-5654695">
    <property type="pathway name" value="PI-3K cascade:FGFR2"/>
</dbReference>
<dbReference type="Reactome" id="R-BTA-5654699">
    <property type="pathway name" value="SHC-mediated cascade:FGFR2"/>
</dbReference>
<dbReference type="Reactome" id="R-BTA-5654700">
    <property type="pathway name" value="FRS-mediated FGFR2 signaling"/>
</dbReference>
<dbReference type="Reactome" id="R-BTA-5654704">
    <property type="pathway name" value="SHC-mediated cascade:FGFR3"/>
</dbReference>
<dbReference type="Reactome" id="R-BTA-5654706">
    <property type="pathway name" value="FRS-mediated FGFR3 signaling"/>
</dbReference>
<dbReference type="Reactome" id="R-BTA-5654710">
    <property type="pathway name" value="PI-3K cascade:FGFR3"/>
</dbReference>
<dbReference type="Reactome" id="R-BTA-5654712">
    <property type="pathway name" value="FRS-mediated FGFR4 signaling"/>
</dbReference>
<dbReference type="Reactome" id="R-BTA-5654719">
    <property type="pathway name" value="SHC-mediated cascade:FGFR4"/>
</dbReference>
<dbReference type="Reactome" id="R-BTA-5654720">
    <property type="pathway name" value="PI-3K cascade:FGFR4"/>
</dbReference>
<dbReference type="Reactome" id="R-BTA-5654726">
    <property type="pathway name" value="Negative regulation of FGFR1 signaling"/>
</dbReference>
<dbReference type="Reactome" id="R-BTA-5654727">
    <property type="pathway name" value="Negative regulation of FGFR2 signaling"/>
</dbReference>
<dbReference type="Reactome" id="R-BTA-5654732">
    <property type="pathway name" value="Negative regulation of FGFR3 signaling"/>
</dbReference>
<dbReference type="Reactome" id="R-BTA-5654733">
    <property type="pathway name" value="Negative regulation of FGFR4 signaling"/>
</dbReference>
<dbReference type="Reactome" id="R-BTA-5673001">
    <property type="pathway name" value="RAF/MAP kinase cascade"/>
</dbReference>
<dbReference type="Reactome" id="R-BTA-6811558">
    <property type="pathway name" value="PI5P, PP2A and IER3 Regulate PI3K/AKT Signaling"/>
</dbReference>
<dbReference type="EvolutionaryTrace" id="P03968"/>
<dbReference type="Proteomes" id="UP000009136">
    <property type="component" value="Chromosome 7"/>
</dbReference>
<dbReference type="Bgee" id="ENSBTAG00000005198">
    <property type="expression patterns" value="Expressed in cardiac ventricle and 97 other cell types or tissues"/>
</dbReference>
<dbReference type="GO" id="GO:0005938">
    <property type="term" value="C:cell cortex"/>
    <property type="evidence" value="ECO:0007669"/>
    <property type="project" value="UniProtKB-SubCell"/>
</dbReference>
<dbReference type="GO" id="GO:0005737">
    <property type="term" value="C:cytoplasm"/>
    <property type="evidence" value="ECO:0000318"/>
    <property type="project" value="GO_Central"/>
</dbReference>
<dbReference type="GO" id="GO:0005829">
    <property type="term" value="C:cytosol"/>
    <property type="evidence" value="ECO:0000250"/>
    <property type="project" value="UniProtKB"/>
</dbReference>
<dbReference type="GO" id="GO:0031012">
    <property type="term" value="C:extracellular matrix"/>
    <property type="evidence" value="ECO:0007669"/>
    <property type="project" value="Ensembl"/>
</dbReference>
<dbReference type="GO" id="GO:0005576">
    <property type="term" value="C:extracellular region"/>
    <property type="evidence" value="ECO:0000250"/>
    <property type="project" value="UniProtKB"/>
</dbReference>
<dbReference type="GO" id="GO:0005615">
    <property type="term" value="C:extracellular space"/>
    <property type="evidence" value="ECO:0000250"/>
    <property type="project" value="UniProtKB"/>
</dbReference>
<dbReference type="GO" id="GO:0005654">
    <property type="term" value="C:nucleoplasm"/>
    <property type="evidence" value="ECO:0007669"/>
    <property type="project" value="Ensembl"/>
</dbReference>
<dbReference type="GO" id="GO:0005634">
    <property type="term" value="C:nucleus"/>
    <property type="evidence" value="ECO:0000318"/>
    <property type="project" value="GO_Central"/>
</dbReference>
<dbReference type="GO" id="GO:0005104">
    <property type="term" value="F:fibroblast growth factor receptor binding"/>
    <property type="evidence" value="ECO:0000250"/>
    <property type="project" value="UniProtKB"/>
</dbReference>
<dbReference type="GO" id="GO:0008083">
    <property type="term" value="F:growth factor activity"/>
    <property type="evidence" value="ECO:0000250"/>
    <property type="project" value="UniProtKB"/>
</dbReference>
<dbReference type="GO" id="GO:0008201">
    <property type="term" value="F:heparin binding"/>
    <property type="evidence" value="ECO:0000250"/>
    <property type="project" value="UniProtKB"/>
</dbReference>
<dbReference type="GO" id="GO:0005178">
    <property type="term" value="F:integrin binding"/>
    <property type="evidence" value="ECO:0000250"/>
    <property type="project" value="UniProtKB"/>
</dbReference>
<dbReference type="GO" id="GO:0044548">
    <property type="term" value="F:S100 protein binding"/>
    <property type="evidence" value="ECO:0000250"/>
    <property type="project" value="UniProtKB"/>
</dbReference>
<dbReference type="GO" id="GO:0032148">
    <property type="term" value="P:activation of protein kinase B activity"/>
    <property type="evidence" value="ECO:0000250"/>
    <property type="project" value="UniProtKB"/>
</dbReference>
<dbReference type="GO" id="GO:0001525">
    <property type="term" value="P:angiogenesis"/>
    <property type="evidence" value="ECO:0007669"/>
    <property type="project" value="UniProtKB-KW"/>
</dbReference>
<dbReference type="GO" id="GO:0060681">
    <property type="term" value="P:branch elongation involved in ureteric bud branching"/>
    <property type="evidence" value="ECO:0000250"/>
    <property type="project" value="UniProtKB"/>
</dbReference>
<dbReference type="GO" id="GO:0034605">
    <property type="term" value="P:cellular response to heat"/>
    <property type="evidence" value="ECO:0000250"/>
    <property type="project" value="UniProtKB"/>
</dbReference>
<dbReference type="GO" id="GO:0050673">
    <property type="term" value="P:epithelial cell proliferation"/>
    <property type="evidence" value="ECO:0007669"/>
    <property type="project" value="Ensembl"/>
</dbReference>
<dbReference type="GO" id="GO:0008543">
    <property type="term" value="P:fibroblast growth factor receptor signaling pathway"/>
    <property type="evidence" value="ECO:0000250"/>
    <property type="project" value="UniProtKB"/>
</dbReference>
<dbReference type="GO" id="GO:0030324">
    <property type="term" value="P:lung development"/>
    <property type="evidence" value="ECO:0007669"/>
    <property type="project" value="Ensembl"/>
</dbReference>
<dbReference type="GO" id="GO:0072163">
    <property type="term" value="P:mesonephric epithelium development"/>
    <property type="evidence" value="ECO:0000250"/>
    <property type="project" value="UniProtKB"/>
</dbReference>
<dbReference type="GO" id="GO:0022008">
    <property type="term" value="P:neurogenesis"/>
    <property type="evidence" value="ECO:0000318"/>
    <property type="project" value="GO_Central"/>
</dbReference>
<dbReference type="GO" id="GO:0001759">
    <property type="term" value="P:organ induction"/>
    <property type="evidence" value="ECO:0007669"/>
    <property type="project" value="Ensembl"/>
</dbReference>
<dbReference type="GO" id="GO:0045766">
    <property type="term" value="P:positive regulation of angiogenesis"/>
    <property type="evidence" value="ECO:0000250"/>
    <property type="project" value="UniProtKB"/>
</dbReference>
<dbReference type="GO" id="GO:0051781">
    <property type="term" value="P:positive regulation of cell division"/>
    <property type="evidence" value="ECO:0000250"/>
    <property type="project" value="UniProtKB"/>
</dbReference>
<dbReference type="GO" id="GO:0030335">
    <property type="term" value="P:positive regulation of cell migration"/>
    <property type="evidence" value="ECO:0000250"/>
    <property type="project" value="UniProtKB"/>
</dbReference>
<dbReference type="GO" id="GO:0008284">
    <property type="term" value="P:positive regulation of cell population proliferation"/>
    <property type="evidence" value="ECO:0000250"/>
    <property type="project" value="UniProtKB"/>
</dbReference>
<dbReference type="GO" id="GO:0045542">
    <property type="term" value="P:positive regulation of cholesterol biosynthetic process"/>
    <property type="evidence" value="ECO:0000250"/>
    <property type="project" value="UniProtKB"/>
</dbReference>
<dbReference type="GO" id="GO:0010595">
    <property type="term" value="P:positive regulation of endothelial cell migration"/>
    <property type="evidence" value="ECO:0000250"/>
    <property type="project" value="UniProtKB"/>
</dbReference>
<dbReference type="GO" id="GO:0050679">
    <property type="term" value="P:positive regulation of epithelial cell proliferation"/>
    <property type="evidence" value="ECO:0007669"/>
    <property type="project" value="Ensembl"/>
</dbReference>
<dbReference type="GO" id="GO:0070374">
    <property type="term" value="P:positive regulation of ERK1 and ERK2 cascade"/>
    <property type="evidence" value="ECO:0000250"/>
    <property type="project" value="UniProtKB"/>
</dbReference>
<dbReference type="GO" id="GO:1902533">
    <property type="term" value="P:positive regulation of intracellular signal transduction"/>
    <property type="evidence" value="ECO:0000250"/>
    <property type="project" value="UniProtKB"/>
</dbReference>
<dbReference type="GO" id="GO:0043410">
    <property type="term" value="P:positive regulation of MAPK cascade"/>
    <property type="evidence" value="ECO:0000318"/>
    <property type="project" value="GO_Central"/>
</dbReference>
<dbReference type="GO" id="GO:1903672">
    <property type="term" value="P:positive regulation of sprouting angiogenesis"/>
    <property type="evidence" value="ECO:0000250"/>
    <property type="project" value="UniProtKB"/>
</dbReference>
<dbReference type="GO" id="GO:0045944">
    <property type="term" value="P:positive regulation of transcription by RNA polymerase II"/>
    <property type="evidence" value="ECO:0000250"/>
    <property type="project" value="UniProtKB"/>
</dbReference>
<dbReference type="GO" id="GO:0030334">
    <property type="term" value="P:regulation of cell migration"/>
    <property type="evidence" value="ECO:0000318"/>
    <property type="project" value="GO_Central"/>
</dbReference>
<dbReference type="GO" id="GO:2000544">
    <property type="term" value="P:regulation of endothelial cell chemotaxis to fibroblast growth factor"/>
    <property type="evidence" value="ECO:0007669"/>
    <property type="project" value="Ensembl"/>
</dbReference>
<dbReference type="GO" id="GO:1901509">
    <property type="term" value="P:regulation of endothelial tube morphogenesis"/>
    <property type="evidence" value="ECO:0000250"/>
    <property type="project" value="UniProtKB"/>
</dbReference>
<dbReference type="GO" id="GO:0042060">
    <property type="term" value="P:wound healing"/>
    <property type="evidence" value="ECO:0007669"/>
    <property type="project" value="Ensembl"/>
</dbReference>
<dbReference type="CDD" id="cd23313">
    <property type="entry name" value="beta-trefoil_FGF1"/>
    <property type="match status" value="1"/>
</dbReference>
<dbReference type="FunFam" id="2.80.10.50:FF:000020">
    <property type="entry name" value="Fibroblast growth factor 1"/>
    <property type="match status" value="1"/>
</dbReference>
<dbReference type="Gene3D" id="2.80.10.50">
    <property type="match status" value="1"/>
</dbReference>
<dbReference type="InterPro" id="IPR002209">
    <property type="entry name" value="Fibroblast_GF_fam"/>
</dbReference>
<dbReference type="InterPro" id="IPR008996">
    <property type="entry name" value="IL1/FGF"/>
</dbReference>
<dbReference type="PANTHER" id="PTHR11486">
    <property type="entry name" value="FIBROBLAST GROWTH FACTOR"/>
    <property type="match status" value="1"/>
</dbReference>
<dbReference type="Pfam" id="PF00167">
    <property type="entry name" value="FGF"/>
    <property type="match status" value="1"/>
</dbReference>
<dbReference type="PRINTS" id="PR00263">
    <property type="entry name" value="HBGFFGF"/>
</dbReference>
<dbReference type="PRINTS" id="PR00262">
    <property type="entry name" value="IL1HBGF"/>
</dbReference>
<dbReference type="SMART" id="SM00442">
    <property type="entry name" value="FGF"/>
    <property type="match status" value="1"/>
</dbReference>
<dbReference type="SUPFAM" id="SSF50353">
    <property type="entry name" value="Cytokine"/>
    <property type="match status" value="1"/>
</dbReference>
<dbReference type="PROSITE" id="PS00247">
    <property type="entry name" value="HBGF_FGF"/>
    <property type="match status" value="1"/>
</dbReference>
<organism>
    <name type="scientific">Bos taurus</name>
    <name type="common">Bovine</name>
    <dbReference type="NCBI Taxonomy" id="9913"/>
    <lineage>
        <taxon>Eukaryota</taxon>
        <taxon>Metazoa</taxon>
        <taxon>Chordata</taxon>
        <taxon>Craniata</taxon>
        <taxon>Vertebrata</taxon>
        <taxon>Euteleostomi</taxon>
        <taxon>Mammalia</taxon>
        <taxon>Eutheria</taxon>
        <taxon>Laurasiatheria</taxon>
        <taxon>Artiodactyla</taxon>
        <taxon>Ruminantia</taxon>
        <taxon>Pecora</taxon>
        <taxon>Bovidae</taxon>
        <taxon>Bovinae</taxon>
        <taxon>Bos</taxon>
    </lineage>
</organism>
<gene>
    <name type="primary">FGF1</name>
    <name type="synonym">AFGF</name>
    <name type="synonym">FGFA</name>
    <name type="synonym">HBGF-1</name>
</gene>
<reference key="1">
    <citation type="journal article" date="1988" name="Nucleic Acids Res.">
        <title>Nucleotide sequence of bovine acidic fibroblast growth factor cDNA.</title>
        <authorList>
            <person name="Halley C."/>
            <person name="Courtois Y."/>
            <person name="Laurent M."/>
        </authorList>
    </citation>
    <scope>NUCLEOTIDE SEQUENCE [MRNA]</scope>
    <source>
        <tissue>Retina</tissue>
    </source>
</reference>
<reference key="2">
    <citation type="journal article" date="1988" name="FEBS Lett.">
        <title>Characterization of a bovine acidic FGF cDNA clone and its expression in brain and retina.</title>
        <authorList>
            <person name="Alterio J."/>
            <person name="Halley C."/>
            <person name="Brou C."/>
            <person name="Soussi T."/>
            <person name="Courtois Y."/>
            <person name="Laurent M."/>
        </authorList>
    </citation>
    <scope>NUCLEOTIDE SEQUENCE [MRNA]</scope>
    <source>
        <tissue>Retina</tissue>
    </source>
</reference>
<reference key="3">
    <citation type="submission" date="2005-08" db="EMBL/GenBank/DDBJ databases">
        <authorList>
            <consortium name="NIH - Mammalian Gene Collection (MGC) project"/>
        </authorList>
    </citation>
    <scope>NUCLEOTIDE SEQUENCE [LARGE SCALE MRNA]</scope>
    <source>
        <strain>Hereford</strain>
        <tissue>Heart ventricle</tissue>
    </source>
</reference>
<reference key="4">
    <citation type="journal article" date="1986" name="Proc. Natl. Acad. Sci. U.S.A.">
        <title>Structural evidence that endothelial cell growth factor beta is the precursor of both endothelial cell growth factor alpha and acidic fibroblast growth factor.</title>
        <authorList>
            <person name="Burgess W.H."/>
            <person name="Mehlman T."/>
            <person name="Marshak D.R."/>
            <person name="Fraser B.A."/>
            <person name="Maciag T."/>
        </authorList>
    </citation>
    <scope>PROTEIN SEQUENCE OF 2-155</scope>
    <scope>ACETYLATION AT ALA-2</scope>
</reference>
<reference key="5">
    <citation type="journal article" date="1986" name="Biochemistry">
        <title>Complete primary structure of prostatropin, a prostate epithelial cell growth factor.</title>
        <authorList>
            <person name="Crabb J.W."/>
            <person name="Armes L.G."/>
            <person name="Carr S.A."/>
            <person name="Johnson C.M."/>
            <person name="Roberts G.D."/>
            <person name="Bordoli R.S."/>
            <person name="McKeehan W.L."/>
        </authorList>
    </citation>
    <scope>PROTEIN SEQUENCE OF 2-155</scope>
</reference>
<reference key="6">
    <citation type="journal article" date="1985" name="Science">
        <title>Brain-derived acidic fibroblast growth factor: complete amino acid sequence and homologies.</title>
        <authorList>
            <person name="Gimenez-Gallego G."/>
            <person name="Rodkey J."/>
            <person name="Bennett C."/>
            <person name="Rios-Candelore M."/>
            <person name="Disalvo J."/>
            <person name="Thomas K."/>
        </authorList>
    </citation>
    <scope>PROTEIN SEQUENCE OF 16-155</scope>
</reference>
<reference key="7">
    <citation type="journal article" date="1985" name="EMBO J.">
        <title>Acidic fibroblast growth factor (FGF) from bovine brain: amino-terminal sequence and comparison with basic FGF.</title>
        <authorList>
            <person name="Boehlen P."/>
            <person name="Esch F."/>
            <person name="Baird A."/>
            <person name="Gospodarowicz D."/>
        </authorList>
    </citation>
    <scope>PROTEIN SEQUENCE OF 16-44</scope>
    <scope>AMINO-ACID COMPOSITION</scope>
</reference>
<reference key="8">
    <citation type="journal article" date="1986" name="Science">
        <title>Nucleotide sequence of a bovine clone encoding the angiogenic protein, basic fibroblast growth factor.</title>
        <authorList>
            <person name="Abraham J.A."/>
            <person name="Mergia A."/>
            <person name="Whang J.L."/>
            <person name="Tumolo A."/>
            <person name="Friedman J."/>
            <person name="Hjerrild K.A."/>
            <person name="Gospodarowicz D."/>
            <person name="Fiddes J.C."/>
        </authorList>
    </citation>
    <scope>NUCLEOTIDE SEQUENCE [GENOMIC DNA] OF 16-56</scope>
</reference>
<reference key="9">
    <citation type="journal article" date="1989" name="Eur. J. Biochem.">
        <title>Isolation of heparin-binding growth factors from bovine, porcine and canine hearts.</title>
        <authorList>
            <person name="Quinkler W."/>
            <person name="Maasberg M."/>
            <person name="Bernotat-Danielowski S."/>
            <person name="Luethe N."/>
            <person name="Sharma H.S."/>
            <person name="Schaper W."/>
        </authorList>
    </citation>
    <scope>PROTEIN SEQUENCE OF 16-45</scope>
</reference>
<reference key="10">
    <citation type="journal article" date="1992" name="Biochem. Biophys. Res. Commun.">
        <title>Cloning of two different 5' untranslated exons of bovine acidic fibroblast growth factor by the single strand ligation to single-stranded cDNA methodology.</title>
        <authorList>
            <person name="Philippe J.-M."/>
            <person name="Renaud F."/>
            <person name="Desset S."/>
            <person name="Laurent M."/>
            <person name="Mallet J."/>
            <person name="Courtois Y."/>
            <person name="Edwards J.B."/>
        </authorList>
    </citation>
    <scope>NUCLEOTIDE SEQUENCE [MRNA] OF 1-18</scope>
</reference>
<reference key="11">
    <citation type="journal article" date="1998" name="J. Biol. Chem.">
        <title>The extravesicular domain of synaptotagmin-1 is released with the latent fibroblast growth factor-1 homodimer in response to heat shock.</title>
        <authorList>
            <person name="Tarantini F."/>
            <person name="LaVallee T."/>
            <person name="Jackson A."/>
            <person name="Gamble S."/>
            <person name="Mouta Carreira C."/>
            <person name="Garfinkel S."/>
            <person name="Burgess W.H."/>
            <person name="Maciag T."/>
        </authorList>
    </citation>
    <scope>INTERACTION WITH SYT1</scope>
    <scope>FUNCTION</scope>
    <scope>HEPARIN BINDING</scope>
    <scope>SUBCELLULAR LOCATION</scope>
</reference>
<reference key="12">
    <citation type="journal article" date="2000" name="Oncogene">
        <title>Regulation of proliferation-survival decisions is controlled by FGF1 secretion in retinal pigmented epithelial cells.</title>
        <authorList>
            <person name="Bryckaert M."/>
            <person name="Guillonneau X."/>
            <person name="Hecquet C."/>
            <person name="Perani P."/>
            <person name="Courtois Y."/>
            <person name="Mascarelli F."/>
        </authorList>
    </citation>
    <scope>FUNCTION</scope>
    <scope>SUBCELLULAR LOCATION</scope>
</reference>
<reference key="13">
    <citation type="journal article" date="1991" name="Science">
        <title>Three-dimensional structures of acidic and basic fibroblast growth factors.</title>
        <authorList>
            <person name="Zhu X."/>
            <person name="Komiya H."/>
            <person name="Chirino A."/>
            <person name="Faham S."/>
            <person name="Fox G.M."/>
            <person name="Arakawa T."/>
            <person name="Hsu B.T."/>
            <person name="Rees D.C."/>
        </authorList>
    </citation>
    <scope>X-RAY CRYSTALLOGRAPHY (3.0 ANGSTROMS)</scope>
</reference>
<proteinExistence type="evidence at protein level"/>
<feature type="initiator methionine" description="Removed" evidence="5 6">
    <location>
        <position position="1"/>
    </location>
</feature>
<feature type="chain" id="PRO_0000008904" description="Endothelial cell growth factor beta">
    <location>
        <begin position="2"/>
        <end position="155"/>
    </location>
</feature>
<feature type="chain" id="PRO_0000008905" description="Fibroblast growth factor 1">
    <location>
        <begin position="16"/>
        <end position="155"/>
    </location>
</feature>
<feature type="chain" id="PRO_0000008906" description="Endothelial cell growth factor alpha">
    <location>
        <begin position="22"/>
        <end position="155"/>
    </location>
</feature>
<feature type="short sequence motif" description="Nuclear localization signal" evidence="1">
    <location>
        <begin position="24"/>
        <end position="27"/>
    </location>
</feature>
<feature type="binding site" evidence="3">
    <location>
        <begin position="24"/>
        <end position="28"/>
    </location>
    <ligand>
        <name>heparin</name>
        <dbReference type="ChEBI" id="CHEBI:28304"/>
    </ligand>
</feature>
<feature type="binding site" evidence="3">
    <location>
        <begin position="113"/>
        <end position="116"/>
    </location>
    <ligand>
        <name>heparin</name>
        <dbReference type="ChEBI" id="CHEBI:28304"/>
    </ligand>
</feature>
<feature type="modified residue" description="N-acetylalanine" evidence="5">
    <location>
        <position position="2"/>
    </location>
</feature>
<feature type="strand" evidence="9">
    <location>
        <begin position="27"/>
        <end position="31"/>
    </location>
</feature>
<feature type="turn" evidence="9">
    <location>
        <begin position="32"/>
        <end position="34"/>
    </location>
</feature>
<feature type="strand" evidence="9">
    <location>
        <begin position="37"/>
        <end position="40"/>
    </location>
</feature>
<feature type="strand" evidence="9">
    <location>
        <begin position="46"/>
        <end position="50"/>
    </location>
</feature>
<feature type="helix" evidence="9">
    <location>
        <begin position="55"/>
        <end position="57"/>
    </location>
</feature>
<feature type="strand" evidence="9">
    <location>
        <begin position="59"/>
        <end position="61"/>
    </location>
</feature>
<feature type="strand" evidence="9">
    <location>
        <begin position="65"/>
        <end position="67"/>
    </location>
</feature>
<feature type="strand" evidence="9">
    <location>
        <begin position="71"/>
        <end position="76"/>
    </location>
</feature>
<feature type="strand" evidence="9">
    <location>
        <begin position="79"/>
        <end position="82"/>
    </location>
</feature>
<feature type="strand" evidence="9">
    <location>
        <begin position="86"/>
        <end position="93"/>
    </location>
</feature>
<feature type="helix" evidence="9">
    <location>
        <begin position="96"/>
        <end position="98"/>
    </location>
</feature>
<feature type="strand" evidence="10">
    <location>
        <begin position="99"/>
        <end position="104"/>
    </location>
</feature>
<feature type="strand" evidence="10">
    <location>
        <begin position="106"/>
        <end position="108"/>
    </location>
</feature>
<feature type="strand" evidence="9">
    <location>
        <begin position="113"/>
        <end position="115"/>
    </location>
</feature>
<feature type="turn" evidence="9">
    <location>
        <begin position="116"/>
        <end position="121"/>
    </location>
</feature>
<feature type="strand" evidence="10">
    <location>
        <begin position="130"/>
        <end position="132"/>
    </location>
</feature>
<feature type="helix" evidence="9">
    <location>
        <begin position="135"/>
        <end position="137"/>
    </location>
</feature>
<feature type="helix" evidence="10">
    <location>
        <begin position="143"/>
        <end position="145"/>
    </location>
</feature>
<feature type="strand" evidence="9">
    <location>
        <begin position="147"/>
        <end position="150"/>
    </location>
</feature>
<accession>P03968</accession>
<accession>Q3ZBL8</accession>
<name>FGF1_BOVIN</name>
<protein>
    <recommendedName>
        <fullName>Fibroblast growth factor 1</fullName>
        <shortName>FGF-1</shortName>
    </recommendedName>
    <alternativeName>
        <fullName>Acidic eye-derived growth factor II</fullName>
        <shortName>EDGF II</shortName>
    </alternativeName>
    <alternativeName>
        <fullName>Acidic fibroblast growth factor</fullName>
        <shortName>aFGF</shortName>
    </alternativeName>
    <alternativeName>
        <fullName>Endothelial cell growth factor</fullName>
        <shortName>ECGF</shortName>
    </alternativeName>
    <alternativeName>
        <fullName>Heparin-binding growth factor 1</fullName>
        <shortName>HBGF-1</shortName>
    </alternativeName>
    <alternativeName>
        <fullName>Prostatropin</fullName>
    </alternativeName>
    <component>
        <recommendedName>
            <fullName>Endothelial cell growth factor beta</fullName>
        </recommendedName>
    </component>
    <component>
        <recommendedName>
            <fullName>Endothelial cell growth factor alpha</fullName>
        </recommendedName>
    </component>
</protein>
<keyword id="KW-0002">3D-structure</keyword>
<keyword id="KW-0007">Acetylation</keyword>
<keyword id="KW-0037">Angiogenesis</keyword>
<keyword id="KW-0963">Cytoplasm</keyword>
<keyword id="KW-0217">Developmental protein</keyword>
<keyword id="KW-0221">Differentiation</keyword>
<keyword id="KW-0903">Direct protein sequencing</keyword>
<keyword id="KW-0339">Growth factor</keyword>
<keyword id="KW-0358">Heparin-binding</keyword>
<keyword id="KW-0497">Mitogen</keyword>
<keyword id="KW-0539">Nucleus</keyword>
<keyword id="KW-0597">Phosphoprotein</keyword>
<keyword id="KW-1185">Reference proteome</keyword>
<keyword id="KW-0964">Secreted</keyword>
<comment type="function">
    <text evidence="2 4 7">Plays an important role in the regulation of cell survival, cell division, angiogenesis, cell differentiation and cell migration. Functions as a potent mitogen in vitro. Acts as a ligand for FGFR1 and integrins. Binds to FGFR1 in the presence of heparin leading to FGFR1 dimerization and activation via sequential autophosphorylation on tyrosine residues which act as docking sites for interacting proteins, leading to the activation of several signaling cascades. Binds to integrin ITGAV:ITGB3. Its binding to integrin, subsequent ternary complex formation with integrin and FGFR1, and the recruitment of PTPN11 to the complex are essential for FGF1 signaling. Induces the phosphorylation and activation of FGFR1, FRS2, MAPK3/ERK1, MAPK1/ERK2 and AKT1. Can induce angiogenesis (By similarity).</text>
</comment>
<comment type="subunit">
    <text evidence="2 7">Monomer. Homodimer. Interacts with FGFR1, FGFR2, FGFR3 and FGFR4. Affinity between fibroblast growth factors (FGFs) and their receptors is increased by heparan sulfate glycosaminoglycans that function as coreceptors. Found in a complex with FGFBP1, FGF1 and FGF2. Interacts with FGFBP1. Part of a Cu(2+)-dependent multiprotein aggregate containing FGF1, S100A13 and SYT1. Interacts with S100A13. Interacts with FGFBP1 (By similarity). Interacts with LRRC59 (By similarity). Interacts with CSNKA, CSNKB and FIBP (By similarity). While binding with LRRC59, CSNKA and FIBP seem mutually exclusive, CSNKB and FIBP may cooperatively interact with FGF1 (By similarity). Interacts with SYT1 (PubMed:9712834). Forms a ternary complex with FGFR1 and ITGAV:ITGB3 and induces the recruitment of PTPN11 to the complex (By similarity).</text>
</comment>
<comment type="interaction">
    <interactant intactId="EBI-6358090">
        <id>P03968</id>
    </interactant>
    <interactant intactId="EBI-1028658">
        <id>P21802</id>
        <label>FGFR2</label>
    </interactant>
    <organismsDiffer>true</organismsDiffer>
    <experiments>2</experiments>
</comment>
<comment type="interaction">
    <interactant intactId="EBI-6358090">
        <id>P03968</id>
    </interactant>
    <interactant intactId="EBI-6354683">
        <id>P21802-3</id>
        <label>FGFR2</label>
    </interactant>
    <organismsDiffer>true</organismsDiffer>
    <experiments>2</experiments>
</comment>
<comment type="subcellular location">
    <subcellularLocation>
        <location>Secreted</location>
    </subcellularLocation>
    <subcellularLocation>
        <location evidence="1">Cytoplasm</location>
    </subcellularLocation>
    <subcellularLocation>
        <location evidence="1">Cytoplasm</location>
        <location evidence="1">Cell cortex</location>
    </subcellularLocation>
    <subcellularLocation>
        <location>Cytoplasm</location>
        <location>Cytosol</location>
    </subcellularLocation>
    <subcellularLocation>
        <location>Nucleus</location>
    </subcellularLocation>
    <text evidence="1">Lacks a cleavable signal sequence. Within the cytoplasm, it is transported to the cell membrane and then secreted by a non-classical pathway that requires Cu(2+) ions and S100A13. Secreted in a complex with SYT1. Binding of exogenous FGF1 to FGFR facilitates endocytosis followed by translocation of FGF1 across endosomal membrane into the cytosol. Nuclear import from the cytosol requires the classical nuclear import machinery, involving proteins KPNA1 and KPNB1, as well as LRRC59 (By similarity).</text>
</comment>
<comment type="PTM">
    <text evidence="1">In the nucleus, phosphorylated by PKC/PRKCD.</text>
</comment>
<comment type="similarity">
    <text evidence="8">Belongs to the heparin-binding growth factors family.</text>
</comment>
<evidence type="ECO:0000250" key="1"/>
<evidence type="ECO:0000250" key="2">
    <source>
        <dbReference type="UniProtKB" id="P05230"/>
    </source>
</evidence>
<evidence type="ECO:0000255" key="3"/>
<evidence type="ECO:0000269" key="4">
    <source>
    </source>
</evidence>
<evidence type="ECO:0000269" key="5">
    <source>
    </source>
</evidence>
<evidence type="ECO:0000269" key="6">
    <source>
    </source>
</evidence>
<evidence type="ECO:0000269" key="7">
    <source>
    </source>
</evidence>
<evidence type="ECO:0000305" key="8"/>
<evidence type="ECO:0007829" key="9">
    <source>
        <dbReference type="PDB" id="1AFC"/>
    </source>
</evidence>
<evidence type="ECO:0007829" key="10">
    <source>
        <dbReference type="PDB" id="1BAR"/>
    </source>
</evidence>
<sequence>MAEGETTTFTALTEKFNLPLGNYKKPKLLYCSNGGYFLRILPDGTVDGTKDRSDQHIQLQLCAESIGEVYIKSTETGQFLAMDTDGLLYGSQTPNEECLFLERLEENHYNTYISKKHAEKHWFVGLKKNGRSKLGPRTHFGQKAILFLPLPVSSD</sequence>